<protein>
    <recommendedName>
        <fullName evidence="1">ATP synthase gamma chain</fullName>
    </recommendedName>
    <alternativeName>
        <fullName evidence="1">ATP synthase F1 sector gamma subunit</fullName>
    </alternativeName>
    <alternativeName>
        <fullName evidence="1">F-ATPase gamma subunit</fullName>
    </alternativeName>
</protein>
<reference key="1">
    <citation type="journal article" date="2005" name="Nat. Genet.">
        <title>The complete genome sequence of Francisella tularensis, the causative agent of tularemia.</title>
        <authorList>
            <person name="Larsson P."/>
            <person name="Oyston P.C.F."/>
            <person name="Chain P."/>
            <person name="Chu M.C."/>
            <person name="Duffield M."/>
            <person name="Fuxelius H.-H."/>
            <person name="Garcia E."/>
            <person name="Haelltorp G."/>
            <person name="Johansson D."/>
            <person name="Isherwood K.E."/>
            <person name="Karp P.D."/>
            <person name="Larsson E."/>
            <person name="Liu Y."/>
            <person name="Michell S."/>
            <person name="Prior J."/>
            <person name="Prior R."/>
            <person name="Malfatti S."/>
            <person name="Sjoestedt A."/>
            <person name="Svensson K."/>
            <person name="Thompson N."/>
            <person name="Vergez L."/>
            <person name="Wagg J.K."/>
            <person name="Wren B.W."/>
            <person name="Lindler L.E."/>
            <person name="Andersson S.G.E."/>
            <person name="Forsman M."/>
            <person name="Titball R.W."/>
        </authorList>
    </citation>
    <scope>NUCLEOTIDE SEQUENCE [LARGE SCALE GENOMIC DNA]</scope>
    <source>
        <strain>SCHU S4 / Schu 4</strain>
    </source>
</reference>
<keyword id="KW-0066">ATP synthesis</keyword>
<keyword id="KW-0997">Cell inner membrane</keyword>
<keyword id="KW-1003">Cell membrane</keyword>
<keyword id="KW-0139">CF(1)</keyword>
<keyword id="KW-0375">Hydrogen ion transport</keyword>
<keyword id="KW-0406">Ion transport</keyword>
<keyword id="KW-0472">Membrane</keyword>
<keyword id="KW-1185">Reference proteome</keyword>
<keyword id="KW-0813">Transport</keyword>
<organism>
    <name type="scientific">Francisella tularensis subsp. tularensis (strain SCHU S4 / Schu 4)</name>
    <dbReference type="NCBI Taxonomy" id="177416"/>
    <lineage>
        <taxon>Bacteria</taxon>
        <taxon>Pseudomonadati</taxon>
        <taxon>Pseudomonadota</taxon>
        <taxon>Gammaproteobacteria</taxon>
        <taxon>Thiotrichales</taxon>
        <taxon>Francisellaceae</taxon>
        <taxon>Francisella</taxon>
    </lineage>
</organism>
<proteinExistence type="inferred from homology"/>
<gene>
    <name evidence="1" type="primary">atpG</name>
    <name type="ordered locus">FTT_0063</name>
</gene>
<comment type="function">
    <text evidence="1">Produces ATP from ADP in the presence of a proton gradient across the membrane. The gamma chain is believed to be important in regulating ATPase activity and the flow of protons through the CF(0) complex.</text>
</comment>
<comment type="subunit">
    <text evidence="1">F-type ATPases have 2 components, CF(1) - the catalytic core - and CF(0) - the membrane proton channel. CF(1) has five subunits: alpha(3), beta(3), gamma(1), delta(1), epsilon(1). CF(0) has three main subunits: a, b and c.</text>
</comment>
<comment type="subcellular location">
    <subcellularLocation>
        <location evidence="1">Cell inner membrane</location>
        <topology evidence="1">Peripheral membrane protein</topology>
    </subcellularLocation>
</comment>
<comment type="similarity">
    <text evidence="1">Belongs to the ATPase gamma chain family.</text>
</comment>
<name>ATPG_FRATT</name>
<feature type="chain" id="PRO_0000073285" description="ATP synthase gamma chain">
    <location>
        <begin position="1"/>
        <end position="298"/>
    </location>
</feature>
<evidence type="ECO:0000255" key="1">
    <source>
        <dbReference type="HAMAP-Rule" id="MF_00815"/>
    </source>
</evidence>
<accession>Q5NIK4</accession>
<dbReference type="EMBL" id="AJ749949">
    <property type="protein sequence ID" value="CAG44696.1"/>
    <property type="molecule type" value="Genomic_DNA"/>
</dbReference>
<dbReference type="RefSeq" id="WP_003019765.1">
    <property type="nucleotide sequence ID" value="NC_006570.2"/>
</dbReference>
<dbReference type="RefSeq" id="YP_169138.1">
    <property type="nucleotide sequence ID" value="NC_006570.2"/>
</dbReference>
<dbReference type="SMR" id="Q5NIK4"/>
<dbReference type="STRING" id="177416.FTT_0063"/>
<dbReference type="DNASU" id="3192500"/>
<dbReference type="EnsemblBacteria" id="CAG44696">
    <property type="protein sequence ID" value="CAG44696"/>
    <property type="gene ID" value="FTT_0063"/>
</dbReference>
<dbReference type="KEGG" id="ftu:FTT_0063"/>
<dbReference type="eggNOG" id="COG0224">
    <property type="taxonomic scope" value="Bacteria"/>
</dbReference>
<dbReference type="OrthoDB" id="9812769at2"/>
<dbReference type="Proteomes" id="UP000001174">
    <property type="component" value="Chromosome"/>
</dbReference>
<dbReference type="GO" id="GO:0005886">
    <property type="term" value="C:plasma membrane"/>
    <property type="evidence" value="ECO:0007669"/>
    <property type="project" value="UniProtKB-SubCell"/>
</dbReference>
<dbReference type="GO" id="GO:0045259">
    <property type="term" value="C:proton-transporting ATP synthase complex"/>
    <property type="evidence" value="ECO:0007669"/>
    <property type="project" value="UniProtKB-KW"/>
</dbReference>
<dbReference type="GO" id="GO:0005524">
    <property type="term" value="F:ATP binding"/>
    <property type="evidence" value="ECO:0007669"/>
    <property type="project" value="UniProtKB-UniRule"/>
</dbReference>
<dbReference type="GO" id="GO:0046933">
    <property type="term" value="F:proton-transporting ATP synthase activity, rotational mechanism"/>
    <property type="evidence" value="ECO:0007669"/>
    <property type="project" value="UniProtKB-UniRule"/>
</dbReference>
<dbReference type="GO" id="GO:0042777">
    <property type="term" value="P:proton motive force-driven plasma membrane ATP synthesis"/>
    <property type="evidence" value="ECO:0007669"/>
    <property type="project" value="UniProtKB-UniRule"/>
</dbReference>
<dbReference type="CDD" id="cd12151">
    <property type="entry name" value="F1-ATPase_gamma"/>
    <property type="match status" value="1"/>
</dbReference>
<dbReference type="Gene3D" id="3.40.1380.10">
    <property type="match status" value="1"/>
</dbReference>
<dbReference type="Gene3D" id="1.10.287.80">
    <property type="entry name" value="ATP synthase, gamma subunit, helix hairpin domain"/>
    <property type="match status" value="1"/>
</dbReference>
<dbReference type="HAMAP" id="MF_00815">
    <property type="entry name" value="ATP_synth_gamma_bact"/>
    <property type="match status" value="1"/>
</dbReference>
<dbReference type="InterPro" id="IPR035968">
    <property type="entry name" value="ATP_synth_F1_ATPase_gsu"/>
</dbReference>
<dbReference type="InterPro" id="IPR000131">
    <property type="entry name" value="ATP_synth_F1_gsu"/>
</dbReference>
<dbReference type="InterPro" id="IPR023632">
    <property type="entry name" value="ATP_synth_F1_gsu_CS"/>
</dbReference>
<dbReference type="NCBIfam" id="TIGR01146">
    <property type="entry name" value="ATPsyn_F1gamma"/>
    <property type="match status" value="1"/>
</dbReference>
<dbReference type="NCBIfam" id="NF009956">
    <property type="entry name" value="PRK13422.1"/>
    <property type="match status" value="1"/>
</dbReference>
<dbReference type="PANTHER" id="PTHR11693">
    <property type="entry name" value="ATP SYNTHASE GAMMA CHAIN"/>
    <property type="match status" value="1"/>
</dbReference>
<dbReference type="PANTHER" id="PTHR11693:SF22">
    <property type="entry name" value="ATP SYNTHASE SUBUNIT GAMMA, MITOCHONDRIAL"/>
    <property type="match status" value="1"/>
</dbReference>
<dbReference type="Pfam" id="PF00231">
    <property type="entry name" value="ATP-synt"/>
    <property type="match status" value="1"/>
</dbReference>
<dbReference type="PRINTS" id="PR00126">
    <property type="entry name" value="ATPASEGAMMA"/>
</dbReference>
<dbReference type="SUPFAM" id="SSF52943">
    <property type="entry name" value="ATP synthase (F1-ATPase), gamma subunit"/>
    <property type="match status" value="1"/>
</dbReference>
<dbReference type="PROSITE" id="PS00153">
    <property type="entry name" value="ATPASE_GAMMA"/>
    <property type="match status" value="1"/>
</dbReference>
<sequence length="298" mass="33243">MSNAREIRSKVQSVKNTQKITGAMELVAASKMRGAIVKMNNVRPYVESANTIIKNVTAASIDYPNPYLFDRDVKRVGYIVISTDRGLCGGLNINLFKHVLKEIKNNIEDRVGVDVCVIGSKAENFFAKLKDVNIVATAHYNDKDKEGSIRAIGGAVKVMLDKFTAGEIDRLYMSSNQFVSTIKQRPRLQTLLPIQDIFSAEEIKANKEKATKGHWDYIYERDIEEVLNALFIRYIEAQVRGAILENAACEQAARMMAMKNATDNASDIIDQLKLDYNKVRQAMITQELAEICSGAAAV</sequence>